<proteinExistence type="inferred from homology"/>
<feature type="chain" id="PRO_0000406922" description="2-amino-5-formylamino-6-ribosylaminopyrimidin-4(3H)-one 5'-monophosphate deformylase">
    <location>
        <begin position="1"/>
        <end position="225"/>
    </location>
</feature>
<feature type="binding site" evidence="2">
    <location>
        <position position="28"/>
    </location>
    <ligand>
        <name>Fe cation</name>
        <dbReference type="ChEBI" id="CHEBI:24875"/>
        <label>1</label>
    </ligand>
</feature>
<feature type="binding site" evidence="2">
    <location>
        <position position="30"/>
    </location>
    <ligand>
        <name>Fe cation</name>
        <dbReference type="ChEBI" id="CHEBI:24875"/>
        <label>2</label>
    </ligand>
</feature>
<feature type="binding site" evidence="2">
    <location>
        <position position="39"/>
    </location>
    <ligand>
        <name>Fe cation</name>
        <dbReference type="ChEBI" id="CHEBI:24875"/>
        <label>1</label>
    </ligand>
</feature>
<feature type="binding site" evidence="2">
    <location>
        <position position="39"/>
    </location>
    <ligand>
        <name>Fe cation</name>
        <dbReference type="ChEBI" id="CHEBI:24875"/>
        <label>2</label>
    </ligand>
</feature>
<feature type="binding site" evidence="2">
    <location>
        <position position="107"/>
    </location>
    <ligand>
        <name>Fe cation</name>
        <dbReference type="ChEBI" id="CHEBI:24875"/>
        <label>1</label>
    </ligand>
</feature>
<comment type="function">
    <text evidence="2">Catalyzes the hydrolysis of the formamide of 2-amino-5-formylamino-6-ribosylamino-4(3H)-pyrimidinone 5'-monophosphate (FAPy) to form 2,5-diamino-6-ribosylamino-4(3H)-pyrimidinone 5'-phosphate (APy).</text>
</comment>
<comment type="catalytic activity">
    <reaction evidence="2">
        <text>2-amino-5-formylamino-6-(5-phospho-D-ribosylamino)pyrimidin-4(3H)-one + H2O = 2,5-diamino-6-(1-D-ribosylamino)pyrimidin-4(3H)-one 5'-phosphate + formate + H(+)</text>
        <dbReference type="Rhea" id="RHEA:27282"/>
        <dbReference type="ChEBI" id="CHEBI:15377"/>
        <dbReference type="ChEBI" id="CHEBI:15378"/>
        <dbReference type="ChEBI" id="CHEBI:15740"/>
        <dbReference type="ChEBI" id="CHEBI:57258"/>
        <dbReference type="ChEBI" id="CHEBI:59545"/>
        <dbReference type="EC" id="3.5.1.102"/>
    </reaction>
</comment>
<comment type="cofactor">
    <cofactor evidence="1">
        <name>Fe(2+)</name>
        <dbReference type="ChEBI" id="CHEBI:29033"/>
    </cofactor>
    <text evidence="1">Requires one Fe(2+) ion for activity.</text>
</comment>
<comment type="cofactor">
    <cofactor evidence="1">
        <name>Fe(2+)</name>
        <dbReference type="ChEBI" id="CHEBI:29033"/>
    </cofactor>
    <cofactor evidence="1">
        <name>Zn(2+)</name>
        <dbReference type="ChEBI" id="CHEBI:29105"/>
    </cofactor>
    <text evidence="1">Requires an additional second metal ion that could be Fe(2+) or Zn(2+).</text>
</comment>
<comment type="pathway">
    <text evidence="2">Cofactor biosynthesis; coenzyme F420 biosynthesis.</text>
</comment>
<comment type="pathway">
    <text evidence="2">Cofactor biosynthesis; riboflavin biosynthesis.</text>
</comment>
<comment type="subunit">
    <text evidence="2">Homodimer.</text>
</comment>
<comment type="similarity">
    <text evidence="2">Belongs to the creatininase superfamily. FAPy deformylase family.</text>
</comment>
<comment type="sequence caution" evidence="3">
    <conflict type="erroneous initiation">
        <sequence resource="EMBL-CDS" id="ADC69669"/>
    </conflict>
    <text>Extended N-terminus.</text>
</comment>
<accession>D3S4A5</accession>
<organism>
    <name type="scientific">Methanocaldococcus sp. (strain FS406-22)</name>
    <dbReference type="NCBI Taxonomy" id="644281"/>
    <lineage>
        <taxon>Archaea</taxon>
        <taxon>Methanobacteriati</taxon>
        <taxon>Methanobacteriota</taxon>
        <taxon>Methanomada group</taxon>
        <taxon>Methanococci</taxon>
        <taxon>Methanococcales</taxon>
        <taxon>Methanocaldococcaceae</taxon>
        <taxon>Methanocaldococcus</taxon>
    </lineage>
</organism>
<name>ARFB_METSF</name>
<gene>
    <name evidence="2" type="primary">arfB</name>
    <name type="ordered locus">MFS40622_0989</name>
</gene>
<evidence type="ECO:0000250" key="1"/>
<evidence type="ECO:0000255" key="2">
    <source>
        <dbReference type="HAMAP-Rule" id="MF_02116"/>
    </source>
</evidence>
<evidence type="ECO:0000305" key="3"/>
<keyword id="KW-0378">Hydrolase</keyword>
<keyword id="KW-0408">Iron</keyword>
<keyword id="KW-0479">Metal-binding</keyword>
<keyword id="KW-0862">Zinc</keyword>
<sequence length="225" mass="25295">MQLRLSSGNILNEKVHKIGIIALGSFLENHGAVLPIDTDIKIASYIALKASILTGAKFLGVVIPSTEYEYVKHGIHNKPEDVYSYLRFLINEGKKIGIEKFLIVNCHGGNVLVESFLKDLEYEFDVKVEMINITFTHASTEEVSVGYVMGIAKADKETLKEHNNFNKYPEVGMVGLKEARENNKAIDEEAKVVEKFGVKLDKELGEKILKESIDKVIEKIKEMIR</sequence>
<reference key="1">
    <citation type="submission" date="2010-02" db="EMBL/GenBank/DDBJ databases">
        <title>Complete sequence of chromosome of Methanocaldococcus sp. FS406-22.</title>
        <authorList>
            <consortium name="US DOE Joint Genome Institute"/>
            <person name="Lucas S."/>
            <person name="Copeland A."/>
            <person name="Lapidus A."/>
            <person name="Cheng J.-F."/>
            <person name="Bruce D."/>
            <person name="Goodwin L."/>
            <person name="Pitluck S."/>
            <person name="Teshima H."/>
            <person name="Detter J.C."/>
            <person name="Han C."/>
            <person name="Tapia R."/>
            <person name="Larimer F."/>
            <person name="Land M."/>
            <person name="Hauser L."/>
            <person name="Kyrpides N."/>
            <person name="Mikhailova N."/>
            <person name="Sieprawska-Lupa M."/>
            <person name="Leigh J."/>
            <person name="Whitman W.B."/>
            <person name="Woyke T."/>
        </authorList>
    </citation>
    <scope>NUCLEOTIDE SEQUENCE [LARGE SCALE GENOMIC DNA]</scope>
    <source>
        <strain>FS406-22</strain>
    </source>
</reference>
<dbReference type="EC" id="3.5.1.102" evidence="2"/>
<dbReference type="EMBL" id="CP001901">
    <property type="protein sequence ID" value="ADC69669.1"/>
    <property type="status" value="ALT_INIT"/>
    <property type="molecule type" value="Genomic_DNA"/>
</dbReference>
<dbReference type="RefSeq" id="WP_048197477.1">
    <property type="nucleotide sequence ID" value="NC_013887.1"/>
</dbReference>
<dbReference type="SMR" id="D3S4A5"/>
<dbReference type="STRING" id="644281.MFS40622_0989"/>
<dbReference type="GeneID" id="8804835"/>
<dbReference type="KEGG" id="mfs:MFS40622_0989"/>
<dbReference type="eggNOG" id="arCOG04536">
    <property type="taxonomic scope" value="Archaea"/>
</dbReference>
<dbReference type="HOGENOM" id="CLU_1192640_0_0_2"/>
<dbReference type="OrthoDB" id="46121at2157"/>
<dbReference type="UniPathway" id="UPA00071"/>
<dbReference type="UniPathway" id="UPA00275"/>
<dbReference type="Proteomes" id="UP000002189">
    <property type="component" value="Chromosome"/>
</dbReference>
<dbReference type="GO" id="GO:0043729">
    <property type="term" value="F:2-amino-5-formylamino-6-(5-phosphoribosylamino)pyrimidin-4(3H)-one formate-lyase activity"/>
    <property type="evidence" value="ECO:0007669"/>
    <property type="project" value="UniProtKB-EC"/>
</dbReference>
<dbReference type="GO" id="GO:0008198">
    <property type="term" value="F:ferrous iron binding"/>
    <property type="evidence" value="ECO:0007669"/>
    <property type="project" value="UniProtKB-UniRule"/>
</dbReference>
<dbReference type="GO" id="GO:0052645">
    <property type="term" value="P:F420-0 metabolic process"/>
    <property type="evidence" value="ECO:0007669"/>
    <property type="project" value="UniProtKB-UniRule"/>
</dbReference>
<dbReference type="GO" id="GO:0009231">
    <property type="term" value="P:riboflavin biosynthetic process"/>
    <property type="evidence" value="ECO:0007669"/>
    <property type="project" value="UniProtKB-UniRule"/>
</dbReference>
<dbReference type="FunFam" id="3.40.50.10310:FF:000012">
    <property type="entry name" value="2-amino-5-formylamino-6-ribosylaminopyrimidin-4(3H)-one 5'-monophosphate deformylase"/>
    <property type="match status" value="1"/>
</dbReference>
<dbReference type="Gene3D" id="3.40.50.10310">
    <property type="entry name" value="Creatininase"/>
    <property type="match status" value="1"/>
</dbReference>
<dbReference type="HAMAP" id="MF_02116">
    <property type="entry name" value="FAPy_deform"/>
    <property type="match status" value="1"/>
</dbReference>
<dbReference type="InterPro" id="IPR024087">
    <property type="entry name" value="Creatininase-like_sf"/>
</dbReference>
<dbReference type="InterPro" id="IPR003785">
    <property type="entry name" value="Creatininase/forma_Hydrolase"/>
</dbReference>
<dbReference type="InterPro" id="IPR024901">
    <property type="entry name" value="FAPy_deformylase"/>
</dbReference>
<dbReference type="NCBIfam" id="NF033501">
    <property type="entry name" value="ArfB_arch_rifla"/>
    <property type="match status" value="1"/>
</dbReference>
<dbReference type="PANTHER" id="PTHR35005:SF1">
    <property type="entry name" value="2-AMINO-5-FORMYLAMINO-6-RIBOSYLAMINOPYRIMIDIN-4(3H)-ONE 5'-MONOPHOSPHATE DEFORMYLASE"/>
    <property type="match status" value="1"/>
</dbReference>
<dbReference type="PANTHER" id="PTHR35005">
    <property type="entry name" value="3-DEHYDRO-SCYLLO-INOSOSE HYDROLASE"/>
    <property type="match status" value="1"/>
</dbReference>
<dbReference type="Pfam" id="PF02633">
    <property type="entry name" value="Creatininase"/>
    <property type="match status" value="1"/>
</dbReference>
<dbReference type="SUPFAM" id="SSF102215">
    <property type="entry name" value="Creatininase"/>
    <property type="match status" value="1"/>
</dbReference>
<protein>
    <recommendedName>
        <fullName evidence="2">2-amino-5-formylamino-6-ribosylaminopyrimidin-4(3H)-one 5'-monophosphate deformylase</fullName>
        <shortName evidence="2">FAPy deformylase</shortName>
        <ecNumber evidence="2">3.5.1.102</ecNumber>
    </recommendedName>
    <alternativeName>
        <fullName evidence="2">Formamide hydrolase</fullName>
    </alternativeName>
</protein>